<name>ACCD_ENT38</name>
<feature type="chain" id="PRO_0000358982" description="Acetyl-coenzyme A carboxylase carboxyl transferase subunit beta">
    <location>
        <begin position="1"/>
        <end position="301"/>
    </location>
</feature>
<feature type="domain" description="CoA carboxyltransferase N-terminal" evidence="2">
    <location>
        <begin position="23"/>
        <end position="292"/>
    </location>
</feature>
<feature type="zinc finger region" description="C4-type" evidence="1">
    <location>
        <begin position="27"/>
        <end position="49"/>
    </location>
</feature>
<feature type="region of interest" description="Disordered" evidence="3">
    <location>
        <begin position="280"/>
        <end position="301"/>
    </location>
</feature>
<feature type="binding site" evidence="1">
    <location>
        <position position="27"/>
    </location>
    <ligand>
        <name>Zn(2+)</name>
        <dbReference type="ChEBI" id="CHEBI:29105"/>
    </ligand>
</feature>
<feature type="binding site" evidence="1">
    <location>
        <position position="30"/>
    </location>
    <ligand>
        <name>Zn(2+)</name>
        <dbReference type="ChEBI" id="CHEBI:29105"/>
    </ligand>
</feature>
<feature type="binding site" evidence="1">
    <location>
        <position position="46"/>
    </location>
    <ligand>
        <name>Zn(2+)</name>
        <dbReference type="ChEBI" id="CHEBI:29105"/>
    </ligand>
</feature>
<feature type="binding site" evidence="1">
    <location>
        <position position="49"/>
    </location>
    <ligand>
        <name>Zn(2+)</name>
        <dbReference type="ChEBI" id="CHEBI:29105"/>
    </ligand>
</feature>
<evidence type="ECO:0000255" key="1">
    <source>
        <dbReference type="HAMAP-Rule" id="MF_01395"/>
    </source>
</evidence>
<evidence type="ECO:0000255" key="2">
    <source>
        <dbReference type="PROSITE-ProRule" id="PRU01136"/>
    </source>
</evidence>
<evidence type="ECO:0000256" key="3">
    <source>
        <dbReference type="SAM" id="MobiDB-lite"/>
    </source>
</evidence>
<accession>A4WCV0</accession>
<dbReference type="EC" id="2.1.3.15" evidence="1"/>
<dbReference type="EMBL" id="CP000653">
    <property type="protein sequence ID" value="ABP61530.1"/>
    <property type="molecule type" value="Genomic_DNA"/>
</dbReference>
<dbReference type="RefSeq" id="WP_015959863.1">
    <property type="nucleotide sequence ID" value="NC_009436.1"/>
</dbReference>
<dbReference type="SMR" id="A4WCV0"/>
<dbReference type="STRING" id="399742.Ent638_2865"/>
<dbReference type="KEGG" id="ent:Ent638_2865"/>
<dbReference type="eggNOG" id="COG0777">
    <property type="taxonomic scope" value="Bacteria"/>
</dbReference>
<dbReference type="HOGENOM" id="CLU_015486_1_0_6"/>
<dbReference type="OrthoDB" id="9772975at2"/>
<dbReference type="UniPathway" id="UPA00655">
    <property type="reaction ID" value="UER00711"/>
</dbReference>
<dbReference type="Proteomes" id="UP000000230">
    <property type="component" value="Chromosome"/>
</dbReference>
<dbReference type="GO" id="GO:0009329">
    <property type="term" value="C:acetate CoA-transferase complex"/>
    <property type="evidence" value="ECO:0007669"/>
    <property type="project" value="TreeGrafter"/>
</dbReference>
<dbReference type="GO" id="GO:0003989">
    <property type="term" value="F:acetyl-CoA carboxylase activity"/>
    <property type="evidence" value="ECO:0007669"/>
    <property type="project" value="InterPro"/>
</dbReference>
<dbReference type="GO" id="GO:0005524">
    <property type="term" value="F:ATP binding"/>
    <property type="evidence" value="ECO:0007669"/>
    <property type="project" value="UniProtKB-KW"/>
</dbReference>
<dbReference type="GO" id="GO:0016743">
    <property type="term" value="F:carboxyl- or carbamoyltransferase activity"/>
    <property type="evidence" value="ECO:0007669"/>
    <property type="project" value="UniProtKB-UniRule"/>
</dbReference>
<dbReference type="GO" id="GO:0008270">
    <property type="term" value="F:zinc ion binding"/>
    <property type="evidence" value="ECO:0007669"/>
    <property type="project" value="UniProtKB-UniRule"/>
</dbReference>
<dbReference type="GO" id="GO:0006633">
    <property type="term" value="P:fatty acid biosynthetic process"/>
    <property type="evidence" value="ECO:0007669"/>
    <property type="project" value="UniProtKB-KW"/>
</dbReference>
<dbReference type="GO" id="GO:2001295">
    <property type="term" value="P:malonyl-CoA biosynthetic process"/>
    <property type="evidence" value="ECO:0007669"/>
    <property type="project" value="UniProtKB-UniRule"/>
</dbReference>
<dbReference type="FunFam" id="3.90.226.10:FF:000013">
    <property type="entry name" value="Acetyl-coenzyme A carboxylase carboxyl transferase subunit beta"/>
    <property type="match status" value="1"/>
</dbReference>
<dbReference type="Gene3D" id="3.90.226.10">
    <property type="entry name" value="2-enoyl-CoA Hydratase, Chain A, domain 1"/>
    <property type="match status" value="1"/>
</dbReference>
<dbReference type="HAMAP" id="MF_01395">
    <property type="entry name" value="AcetylCoA_CT_beta"/>
    <property type="match status" value="1"/>
</dbReference>
<dbReference type="InterPro" id="IPR034733">
    <property type="entry name" value="AcCoA_carboxyl_beta"/>
</dbReference>
<dbReference type="InterPro" id="IPR000438">
    <property type="entry name" value="Acetyl_CoA_COase_Trfase_b_su"/>
</dbReference>
<dbReference type="InterPro" id="IPR029045">
    <property type="entry name" value="ClpP/crotonase-like_dom_sf"/>
</dbReference>
<dbReference type="InterPro" id="IPR011762">
    <property type="entry name" value="COA_CT_N"/>
</dbReference>
<dbReference type="InterPro" id="IPR041010">
    <property type="entry name" value="Znf-ACC"/>
</dbReference>
<dbReference type="NCBIfam" id="TIGR00515">
    <property type="entry name" value="accD"/>
    <property type="match status" value="1"/>
</dbReference>
<dbReference type="PANTHER" id="PTHR42995">
    <property type="entry name" value="ACETYL-COENZYME A CARBOXYLASE CARBOXYL TRANSFERASE SUBUNIT BETA, CHLOROPLASTIC"/>
    <property type="match status" value="1"/>
</dbReference>
<dbReference type="PANTHER" id="PTHR42995:SF5">
    <property type="entry name" value="ACETYL-COENZYME A CARBOXYLASE CARBOXYL TRANSFERASE SUBUNIT BETA, CHLOROPLASTIC"/>
    <property type="match status" value="1"/>
</dbReference>
<dbReference type="Pfam" id="PF01039">
    <property type="entry name" value="Carboxyl_trans"/>
    <property type="match status" value="1"/>
</dbReference>
<dbReference type="Pfam" id="PF17848">
    <property type="entry name" value="Zn_ribbon_ACC"/>
    <property type="match status" value="1"/>
</dbReference>
<dbReference type="PRINTS" id="PR01070">
    <property type="entry name" value="ACCCTRFRASEB"/>
</dbReference>
<dbReference type="SUPFAM" id="SSF52096">
    <property type="entry name" value="ClpP/crotonase"/>
    <property type="match status" value="1"/>
</dbReference>
<dbReference type="PROSITE" id="PS50980">
    <property type="entry name" value="COA_CT_NTER"/>
    <property type="match status" value="1"/>
</dbReference>
<protein>
    <recommendedName>
        <fullName evidence="1">Acetyl-coenzyme A carboxylase carboxyl transferase subunit beta</fullName>
        <shortName evidence="1">ACCase subunit beta</shortName>
        <shortName evidence="1">Acetyl-CoA carboxylase carboxyltransferase subunit beta</shortName>
        <ecNumber evidence="1">2.1.3.15</ecNumber>
    </recommendedName>
</protein>
<reference key="1">
    <citation type="journal article" date="2010" name="PLoS Genet.">
        <title>Genome sequence of the plant growth promoting endophytic bacterium Enterobacter sp. 638.</title>
        <authorList>
            <person name="Taghavi S."/>
            <person name="van der Lelie D."/>
            <person name="Hoffman A."/>
            <person name="Zhang Y.B."/>
            <person name="Walla M.D."/>
            <person name="Vangronsveld J."/>
            <person name="Newman L."/>
            <person name="Monchy S."/>
        </authorList>
    </citation>
    <scope>NUCLEOTIDE SEQUENCE [LARGE SCALE GENOMIC DNA]</scope>
    <source>
        <strain>638</strain>
    </source>
</reference>
<organism>
    <name type="scientific">Enterobacter sp. (strain 638)</name>
    <dbReference type="NCBI Taxonomy" id="399742"/>
    <lineage>
        <taxon>Bacteria</taxon>
        <taxon>Pseudomonadati</taxon>
        <taxon>Pseudomonadota</taxon>
        <taxon>Gammaproteobacteria</taxon>
        <taxon>Enterobacterales</taxon>
        <taxon>Enterobacteriaceae</taxon>
        <taxon>Enterobacter</taxon>
    </lineage>
</organism>
<proteinExistence type="inferred from homology"/>
<sequence>MSWIERIKSNIAPTRKASIPEGVWTKCDSCGQVLYRAELERNLEVCPKCDHHMRMSARNRLHSLLDEGTMVELGSELEPKDLLKFRDSKKYKDRIASAQKETGEKDALVVMKGTLHEMPVVAAAFEFSFMGGSMGSVVGARFIRAVEQALEDNCPLICFSASGGARMQEALMSLMQMAKTSAALGKMQERGLPYISVLTDPTMGGVSASFAMLGDLNIAEPKALIGFAGPRVIEQTVREKLPPGFQRSEFLIQKGAIDMIVRRPEMRLKLASVLAKLMNLPAPSPDEPRESVVVPDQEPEA</sequence>
<keyword id="KW-0067">ATP-binding</keyword>
<keyword id="KW-0963">Cytoplasm</keyword>
<keyword id="KW-0275">Fatty acid biosynthesis</keyword>
<keyword id="KW-0276">Fatty acid metabolism</keyword>
<keyword id="KW-0444">Lipid biosynthesis</keyword>
<keyword id="KW-0443">Lipid metabolism</keyword>
<keyword id="KW-0479">Metal-binding</keyword>
<keyword id="KW-0547">Nucleotide-binding</keyword>
<keyword id="KW-0808">Transferase</keyword>
<keyword id="KW-0862">Zinc</keyword>
<keyword id="KW-0863">Zinc-finger</keyword>
<gene>
    <name evidence="1" type="primary">accD</name>
    <name type="ordered locus">Ent638_2865</name>
</gene>
<comment type="function">
    <text evidence="1">Component of the acetyl coenzyme A carboxylase (ACC) complex. Biotin carboxylase (BC) catalyzes the carboxylation of biotin on its carrier protein (BCCP) and then the CO(2) group is transferred by the transcarboxylase to acetyl-CoA to form malonyl-CoA.</text>
</comment>
<comment type="catalytic activity">
    <reaction evidence="1">
        <text>N(6)-carboxybiotinyl-L-lysyl-[protein] + acetyl-CoA = N(6)-biotinyl-L-lysyl-[protein] + malonyl-CoA</text>
        <dbReference type="Rhea" id="RHEA:54728"/>
        <dbReference type="Rhea" id="RHEA-COMP:10505"/>
        <dbReference type="Rhea" id="RHEA-COMP:10506"/>
        <dbReference type="ChEBI" id="CHEBI:57288"/>
        <dbReference type="ChEBI" id="CHEBI:57384"/>
        <dbReference type="ChEBI" id="CHEBI:83144"/>
        <dbReference type="ChEBI" id="CHEBI:83145"/>
        <dbReference type="EC" id="2.1.3.15"/>
    </reaction>
</comment>
<comment type="cofactor">
    <cofactor evidence="1">
        <name>Zn(2+)</name>
        <dbReference type="ChEBI" id="CHEBI:29105"/>
    </cofactor>
    <text evidence="1">Binds 1 zinc ion per subunit.</text>
</comment>
<comment type="pathway">
    <text evidence="1">Lipid metabolism; malonyl-CoA biosynthesis; malonyl-CoA from acetyl-CoA: step 1/1.</text>
</comment>
<comment type="subunit">
    <text evidence="1">Acetyl-CoA carboxylase is a heterohexamer composed of biotin carboxyl carrier protein (AccB), biotin carboxylase (AccC) and two subunits each of ACCase subunit alpha (AccA) and ACCase subunit beta (AccD).</text>
</comment>
<comment type="subcellular location">
    <subcellularLocation>
        <location evidence="1">Cytoplasm</location>
    </subcellularLocation>
</comment>
<comment type="similarity">
    <text evidence="1">Belongs to the AccD/PCCB family.</text>
</comment>